<sequence length="461" mass="50064">MSQGKVVQIIGAVVDIEFPQDSVPKIYDALRITEGDLQGLTLEVQQQLGGGVVRTIALGTTDGLRRGLTVDNTGEAIQVPVGKATLGRIMDVLGNPIDEAGPIGEEERMSIHREAPTYEDQSSSIELLETGIKVIDLVCPFAKGGKVGLFGGAGVGKTVNMMELIRNIAIEHSGYSVFAGVGERTREGNDFYHEMNESNVLDKVSLVYGQMNEPPGNRLRVALTGLTMAEKFRDEGRDVLFFVDNIYRYTLAGTEVSALLGRMPSAVGYQPTLAEEMGVLQERIASTKTGSITSIQAVYVPADDLTDPSPATTFAHLDATVVLSRDIASLGIYPAVDPLDSTSRQLDPLVIGQEHYDTARGVQSVLQRYKELKDIIAILGMDELSEEDKLSVSRARKIQRFLSQPFFVAEVFTGSPGKYVSLKDTISGFKGILEGEFDDLPEQAFYMVGSIEEASEKAKKM</sequence>
<proteinExistence type="inferred from homology"/>
<protein>
    <recommendedName>
        <fullName evidence="1">ATP synthase subunit beta 2</fullName>
        <ecNumber evidence="1">7.1.2.2</ecNumber>
    </recommendedName>
    <alternativeName>
        <fullName evidence="1">ATP synthase F1 sector subunit beta 2</fullName>
    </alternativeName>
    <alternativeName>
        <fullName evidence="1">F-ATPase subunit beta 2</fullName>
    </alternativeName>
</protein>
<keyword id="KW-0066">ATP synthesis</keyword>
<keyword id="KW-0067">ATP-binding</keyword>
<keyword id="KW-0997">Cell inner membrane</keyword>
<keyword id="KW-1003">Cell membrane</keyword>
<keyword id="KW-0139">CF(1)</keyword>
<keyword id="KW-0375">Hydrogen ion transport</keyword>
<keyword id="KW-0406">Ion transport</keyword>
<keyword id="KW-0472">Membrane</keyword>
<keyword id="KW-0547">Nucleotide-binding</keyword>
<keyword id="KW-1278">Translocase</keyword>
<keyword id="KW-0813">Transport</keyword>
<evidence type="ECO:0000255" key="1">
    <source>
        <dbReference type="HAMAP-Rule" id="MF_01347"/>
    </source>
</evidence>
<comment type="function">
    <text evidence="1">Produces ATP from ADP in the presence of a proton gradient across the membrane. The catalytic sites are hosted primarily by the beta subunits.</text>
</comment>
<comment type="catalytic activity">
    <reaction evidence="1">
        <text>ATP + H2O + 4 H(+)(in) = ADP + phosphate + 5 H(+)(out)</text>
        <dbReference type="Rhea" id="RHEA:57720"/>
        <dbReference type="ChEBI" id="CHEBI:15377"/>
        <dbReference type="ChEBI" id="CHEBI:15378"/>
        <dbReference type="ChEBI" id="CHEBI:30616"/>
        <dbReference type="ChEBI" id="CHEBI:43474"/>
        <dbReference type="ChEBI" id="CHEBI:456216"/>
        <dbReference type="EC" id="7.1.2.2"/>
    </reaction>
</comment>
<comment type="subunit">
    <text evidence="1">F-type ATPases have 2 components, CF(1) - the catalytic core - and CF(0) - the membrane proton channel. CF(1) has five subunits: alpha(3), beta(3), gamma(1), delta(1), epsilon(1). CF(0) has three main subunits: a(1), b(2) and c(9-12). The alpha and beta chains form an alternating ring which encloses part of the gamma chain. CF(1) is attached to CF(0) by a central stalk formed by the gamma and epsilon chains, while a peripheral stalk is formed by the delta and b chains.</text>
</comment>
<comment type="subcellular location">
    <subcellularLocation>
        <location evidence="1">Cell inner membrane</location>
        <topology evidence="1">Peripheral membrane protein</topology>
    </subcellularLocation>
</comment>
<comment type="similarity">
    <text evidence="1">Belongs to the ATPase alpha/beta chains family.</text>
</comment>
<reference key="1">
    <citation type="submission" date="2006-06" db="EMBL/GenBank/DDBJ databases">
        <title>Complete sequence of Pseudoalteromonas atlantica T6c.</title>
        <authorList>
            <consortium name="US DOE Joint Genome Institute"/>
            <person name="Copeland A."/>
            <person name="Lucas S."/>
            <person name="Lapidus A."/>
            <person name="Barry K."/>
            <person name="Detter J.C."/>
            <person name="Glavina del Rio T."/>
            <person name="Hammon N."/>
            <person name="Israni S."/>
            <person name="Dalin E."/>
            <person name="Tice H."/>
            <person name="Pitluck S."/>
            <person name="Saunders E."/>
            <person name="Brettin T."/>
            <person name="Bruce D."/>
            <person name="Han C."/>
            <person name="Tapia R."/>
            <person name="Gilna P."/>
            <person name="Schmutz J."/>
            <person name="Larimer F."/>
            <person name="Land M."/>
            <person name="Hauser L."/>
            <person name="Kyrpides N."/>
            <person name="Kim E."/>
            <person name="Karls A.C."/>
            <person name="Bartlett D."/>
            <person name="Higgins B.P."/>
            <person name="Richardson P."/>
        </authorList>
    </citation>
    <scope>NUCLEOTIDE SEQUENCE [LARGE SCALE GENOMIC DNA]</scope>
    <source>
        <strain>T6c / ATCC BAA-1087</strain>
    </source>
</reference>
<organism>
    <name type="scientific">Pseudoalteromonas atlantica (strain T6c / ATCC BAA-1087)</name>
    <dbReference type="NCBI Taxonomy" id="3042615"/>
    <lineage>
        <taxon>Bacteria</taxon>
        <taxon>Pseudomonadati</taxon>
        <taxon>Pseudomonadota</taxon>
        <taxon>Gammaproteobacteria</taxon>
        <taxon>Alteromonadales</taxon>
        <taxon>Alteromonadaceae</taxon>
        <taxon>Paraglaciecola</taxon>
    </lineage>
</organism>
<accession>Q15MU4</accession>
<dbReference type="EC" id="7.1.2.2" evidence="1"/>
<dbReference type="EMBL" id="CP000388">
    <property type="protein sequence ID" value="ABG42794.1"/>
    <property type="molecule type" value="Genomic_DNA"/>
</dbReference>
<dbReference type="RefSeq" id="WP_011576976.1">
    <property type="nucleotide sequence ID" value="NC_008228.1"/>
</dbReference>
<dbReference type="SMR" id="Q15MU4"/>
<dbReference type="STRING" id="342610.Patl_4295"/>
<dbReference type="KEGG" id="pat:Patl_4295"/>
<dbReference type="eggNOG" id="COG0055">
    <property type="taxonomic scope" value="Bacteria"/>
</dbReference>
<dbReference type="HOGENOM" id="CLU_022398_0_2_6"/>
<dbReference type="OrthoDB" id="9801639at2"/>
<dbReference type="Proteomes" id="UP000001981">
    <property type="component" value="Chromosome"/>
</dbReference>
<dbReference type="GO" id="GO:0005886">
    <property type="term" value="C:plasma membrane"/>
    <property type="evidence" value="ECO:0007669"/>
    <property type="project" value="UniProtKB-SubCell"/>
</dbReference>
<dbReference type="GO" id="GO:0045259">
    <property type="term" value="C:proton-transporting ATP synthase complex"/>
    <property type="evidence" value="ECO:0007669"/>
    <property type="project" value="UniProtKB-KW"/>
</dbReference>
<dbReference type="GO" id="GO:0005524">
    <property type="term" value="F:ATP binding"/>
    <property type="evidence" value="ECO:0007669"/>
    <property type="project" value="UniProtKB-UniRule"/>
</dbReference>
<dbReference type="GO" id="GO:0016887">
    <property type="term" value="F:ATP hydrolysis activity"/>
    <property type="evidence" value="ECO:0007669"/>
    <property type="project" value="InterPro"/>
</dbReference>
<dbReference type="GO" id="GO:0046933">
    <property type="term" value="F:proton-transporting ATP synthase activity, rotational mechanism"/>
    <property type="evidence" value="ECO:0007669"/>
    <property type="project" value="UniProtKB-UniRule"/>
</dbReference>
<dbReference type="CDD" id="cd18110">
    <property type="entry name" value="ATP-synt_F1_beta_C"/>
    <property type="match status" value="1"/>
</dbReference>
<dbReference type="CDD" id="cd18115">
    <property type="entry name" value="ATP-synt_F1_beta_N"/>
    <property type="match status" value="1"/>
</dbReference>
<dbReference type="CDD" id="cd01133">
    <property type="entry name" value="F1-ATPase_beta_CD"/>
    <property type="match status" value="1"/>
</dbReference>
<dbReference type="FunFam" id="1.10.1140.10:FF:000001">
    <property type="entry name" value="ATP synthase subunit beta"/>
    <property type="match status" value="1"/>
</dbReference>
<dbReference type="FunFam" id="2.40.10.170:FF:000003">
    <property type="entry name" value="ATP synthase subunit beta"/>
    <property type="match status" value="1"/>
</dbReference>
<dbReference type="FunFam" id="3.40.50.300:FF:000004">
    <property type="entry name" value="ATP synthase subunit beta"/>
    <property type="match status" value="1"/>
</dbReference>
<dbReference type="Gene3D" id="2.40.10.170">
    <property type="match status" value="1"/>
</dbReference>
<dbReference type="Gene3D" id="1.10.1140.10">
    <property type="entry name" value="Bovine Mitochondrial F1-atpase, Atp Synthase Beta Chain, Chain D, domain 3"/>
    <property type="match status" value="1"/>
</dbReference>
<dbReference type="Gene3D" id="3.40.50.300">
    <property type="entry name" value="P-loop containing nucleotide triphosphate hydrolases"/>
    <property type="match status" value="1"/>
</dbReference>
<dbReference type="HAMAP" id="MF_01347">
    <property type="entry name" value="ATP_synth_beta_bact"/>
    <property type="match status" value="1"/>
</dbReference>
<dbReference type="InterPro" id="IPR003593">
    <property type="entry name" value="AAA+_ATPase"/>
</dbReference>
<dbReference type="InterPro" id="IPR055190">
    <property type="entry name" value="ATP-synt_VA_C"/>
</dbReference>
<dbReference type="InterPro" id="IPR005722">
    <property type="entry name" value="ATP_synth_F1_bsu"/>
</dbReference>
<dbReference type="InterPro" id="IPR020003">
    <property type="entry name" value="ATPase_a/bsu_AS"/>
</dbReference>
<dbReference type="InterPro" id="IPR050053">
    <property type="entry name" value="ATPase_alpha/beta_chains"/>
</dbReference>
<dbReference type="InterPro" id="IPR004100">
    <property type="entry name" value="ATPase_F1/V1/A1_a/bsu_N"/>
</dbReference>
<dbReference type="InterPro" id="IPR036121">
    <property type="entry name" value="ATPase_F1/V1/A1_a/bsu_N_sf"/>
</dbReference>
<dbReference type="InterPro" id="IPR000194">
    <property type="entry name" value="ATPase_F1/V1/A1_a/bsu_nucl-bd"/>
</dbReference>
<dbReference type="InterPro" id="IPR024034">
    <property type="entry name" value="ATPase_F1/V1_b/a_C"/>
</dbReference>
<dbReference type="InterPro" id="IPR027417">
    <property type="entry name" value="P-loop_NTPase"/>
</dbReference>
<dbReference type="NCBIfam" id="TIGR01039">
    <property type="entry name" value="atpD"/>
    <property type="match status" value="1"/>
</dbReference>
<dbReference type="PANTHER" id="PTHR15184">
    <property type="entry name" value="ATP SYNTHASE"/>
    <property type="match status" value="1"/>
</dbReference>
<dbReference type="PANTHER" id="PTHR15184:SF71">
    <property type="entry name" value="ATP SYNTHASE SUBUNIT BETA, MITOCHONDRIAL"/>
    <property type="match status" value="1"/>
</dbReference>
<dbReference type="Pfam" id="PF00006">
    <property type="entry name" value="ATP-synt_ab"/>
    <property type="match status" value="1"/>
</dbReference>
<dbReference type="Pfam" id="PF02874">
    <property type="entry name" value="ATP-synt_ab_N"/>
    <property type="match status" value="1"/>
</dbReference>
<dbReference type="Pfam" id="PF22919">
    <property type="entry name" value="ATP-synt_VA_C"/>
    <property type="match status" value="1"/>
</dbReference>
<dbReference type="SMART" id="SM00382">
    <property type="entry name" value="AAA"/>
    <property type="match status" value="1"/>
</dbReference>
<dbReference type="SUPFAM" id="SSF47917">
    <property type="entry name" value="C-terminal domain of alpha and beta subunits of F1 ATP synthase"/>
    <property type="match status" value="1"/>
</dbReference>
<dbReference type="SUPFAM" id="SSF50615">
    <property type="entry name" value="N-terminal domain of alpha and beta subunits of F1 ATP synthase"/>
    <property type="match status" value="1"/>
</dbReference>
<dbReference type="SUPFAM" id="SSF52540">
    <property type="entry name" value="P-loop containing nucleoside triphosphate hydrolases"/>
    <property type="match status" value="1"/>
</dbReference>
<dbReference type="PROSITE" id="PS00152">
    <property type="entry name" value="ATPASE_ALPHA_BETA"/>
    <property type="match status" value="1"/>
</dbReference>
<gene>
    <name evidence="1" type="primary">atpD2</name>
    <name type="ordered locus">Patl_4295</name>
</gene>
<feature type="chain" id="PRO_0000339573" description="ATP synthase subunit beta 2">
    <location>
        <begin position="1"/>
        <end position="461"/>
    </location>
</feature>
<feature type="binding site" evidence="1">
    <location>
        <begin position="151"/>
        <end position="158"/>
    </location>
    <ligand>
        <name>ATP</name>
        <dbReference type="ChEBI" id="CHEBI:30616"/>
    </ligand>
</feature>
<name>ATPB2_PSEA6</name>